<gene>
    <name evidence="1" type="primary">pgk</name>
    <name type="ordered locus">CLJ_B0275</name>
</gene>
<keyword id="KW-0067">ATP-binding</keyword>
<keyword id="KW-0963">Cytoplasm</keyword>
<keyword id="KW-0324">Glycolysis</keyword>
<keyword id="KW-0418">Kinase</keyword>
<keyword id="KW-0547">Nucleotide-binding</keyword>
<keyword id="KW-0808">Transferase</keyword>
<organism>
    <name type="scientific">Clostridium botulinum (strain 657 / Type Ba4)</name>
    <dbReference type="NCBI Taxonomy" id="515621"/>
    <lineage>
        <taxon>Bacteria</taxon>
        <taxon>Bacillati</taxon>
        <taxon>Bacillota</taxon>
        <taxon>Clostridia</taxon>
        <taxon>Eubacteriales</taxon>
        <taxon>Clostridiaceae</taxon>
        <taxon>Clostridium</taxon>
    </lineage>
</organism>
<evidence type="ECO:0000255" key="1">
    <source>
        <dbReference type="HAMAP-Rule" id="MF_00145"/>
    </source>
</evidence>
<dbReference type="EC" id="2.7.2.3" evidence="1"/>
<dbReference type="EMBL" id="CP001083">
    <property type="protein sequence ID" value="ACQ52552.1"/>
    <property type="molecule type" value="Genomic_DNA"/>
</dbReference>
<dbReference type="RefSeq" id="WP_003360477.1">
    <property type="nucleotide sequence ID" value="NC_012658.1"/>
</dbReference>
<dbReference type="SMR" id="C3KYR4"/>
<dbReference type="KEGG" id="cbi:CLJ_B0275"/>
<dbReference type="HOGENOM" id="CLU_025427_0_2_9"/>
<dbReference type="UniPathway" id="UPA00109">
    <property type="reaction ID" value="UER00185"/>
</dbReference>
<dbReference type="Proteomes" id="UP000002333">
    <property type="component" value="Chromosome"/>
</dbReference>
<dbReference type="GO" id="GO:0005829">
    <property type="term" value="C:cytosol"/>
    <property type="evidence" value="ECO:0007669"/>
    <property type="project" value="TreeGrafter"/>
</dbReference>
<dbReference type="GO" id="GO:0043531">
    <property type="term" value="F:ADP binding"/>
    <property type="evidence" value="ECO:0007669"/>
    <property type="project" value="TreeGrafter"/>
</dbReference>
<dbReference type="GO" id="GO:0005524">
    <property type="term" value="F:ATP binding"/>
    <property type="evidence" value="ECO:0007669"/>
    <property type="project" value="UniProtKB-KW"/>
</dbReference>
<dbReference type="GO" id="GO:0004618">
    <property type="term" value="F:phosphoglycerate kinase activity"/>
    <property type="evidence" value="ECO:0007669"/>
    <property type="project" value="UniProtKB-UniRule"/>
</dbReference>
<dbReference type="GO" id="GO:0006094">
    <property type="term" value="P:gluconeogenesis"/>
    <property type="evidence" value="ECO:0007669"/>
    <property type="project" value="TreeGrafter"/>
</dbReference>
<dbReference type="GO" id="GO:0006096">
    <property type="term" value="P:glycolytic process"/>
    <property type="evidence" value="ECO:0007669"/>
    <property type="project" value="UniProtKB-UniRule"/>
</dbReference>
<dbReference type="CDD" id="cd00318">
    <property type="entry name" value="Phosphoglycerate_kinase"/>
    <property type="match status" value="1"/>
</dbReference>
<dbReference type="FunFam" id="3.40.50.1260:FF:000007">
    <property type="entry name" value="Phosphoglycerate kinase"/>
    <property type="match status" value="1"/>
</dbReference>
<dbReference type="FunFam" id="3.40.50.1260:FF:000008">
    <property type="entry name" value="Phosphoglycerate kinase"/>
    <property type="match status" value="1"/>
</dbReference>
<dbReference type="Gene3D" id="3.40.50.1260">
    <property type="entry name" value="Phosphoglycerate kinase, N-terminal domain"/>
    <property type="match status" value="2"/>
</dbReference>
<dbReference type="HAMAP" id="MF_00145">
    <property type="entry name" value="Phosphoglyc_kinase"/>
    <property type="match status" value="1"/>
</dbReference>
<dbReference type="InterPro" id="IPR001576">
    <property type="entry name" value="Phosphoglycerate_kinase"/>
</dbReference>
<dbReference type="InterPro" id="IPR015911">
    <property type="entry name" value="Phosphoglycerate_kinase_CS"/>
</dbReference>
<dbReference type="InterPro" id="IPR015824">
    <property type="entry name" value="Phosphoglycerate_kinase_N"/>
</dbReference>
<dbReference type="InterPro" id="IPR036043">
    <property type="entry name" value="Phosphoglycerate_kinase_sf"/>
</dbReference>
<dbReference type="PANTHER" id="PTHR11406">
    <property type="entry name" value="PHOSPHOGLYCERATE KINASE"/>
    <property type="match status" value="1"/>
</dbReference>
<dbReference type="PANTHER" id="PTHR11406:SF23">
    <property type="entry name" value="PHOSPHOGLYCERATE KINASE 1, CHLOROPLASTIC-RELATED"/>
    <property type="match status" value="1"/>
</dbReference>
<dbReference type="Pfam" id="PF00162">
    <property type="entry name" value="PGK"/>
    <property type="match status" value="1"/>
</dbReference>
<dbReference type="PIRSF" id="PIRSF000724">
    <property type="entry name" value="Pgk"/>
    <property type="match status" value="1"/>
</dbReference>
<dbReference type="PRINTS" id="PR00477">
    <property type="entry name" value="PHGLYCKINASE"/>
</dbReference>
<dbReference type="SUPFAM" id="SSF53748">
    <property type="entry name" value="Phosphoglycerate kinase"/>
    <property type="match status" value="1"/>
</dbReference>
<dbReference type="PROSITE" id="PS00111">
    <property type="entry name" value="PGLYCERATE_KINASE"/>
    <property type="match status" value="1"/>
</dbReference>
<proteinExistence type="inferred from homology"/>
<protein>
    <recommendedName>
        <fullName evidence="1">Phosphoglycerate kinase</fullName>
        <ecNumber evidence="1">2.7.2.3</ecNumber>
    </recommendedName>
</protein>
<name>PGK_CLOB6</name>
<reference key="1">
    <citation type="submission" date="2008-05" db="EMBL/GenBank/DDBJ databases">
        <title>Genome sequence of Clostridium botulinum Ba4 strain 657.</title>
        <authorList>
            <person name="Shrivastava S."/>
            <person name="Brown J.L."/>
            <person name="Bruce D."/>
            <person name="Detter C."/>
            <person name="Munk C."/>
            <person name="Smith L.A."/>
            <person name="Smith T.J."/>
            <person name="Sutton G."/>
            <person name="Brettin T.S."/>
        </authorList>
    </citation>
    <scope>NUCLEOTIDE SEQUENCE [LARGE SCALE GENOMIC DNA]</scope>
    <source>
        <strain>657 / Type Ba4</strain>
    </source>
</reference>
<accession>C3KYR4</accession>
<comment type="catalytic activity">
    <reaction evidence="1">
        <text>(2R)-3-phosphoglycerate + ATP = (2R)-3-phospho-glyceroyl phosphate + ADP</text>
        <dbReference type="Rhea" id="RHEA:14801"/>
        <dbReference type="ChEBI" id="CHEBI:30616"/>
        <dbReference type="ChEBI" id="CHEBI:57604"/>
        <dbReference type="ChEBI" id="CHEBI:58272"/>
        <dbReference type="ChEBI" id="CHEBI:456216"/>
        <dbReference type="EC" id="2.7.2.3"/>
    </reaction>
</comment>
<comment type="pathway">
    <text evidence="1">Carbohydrate degradation; glycolysis; pyruvate from D-glyceraldehyde 3-phosphate: step 2/5.</text>
</comment>
<comment type="subunit">
    <text evidence="1">Monomer.</text>
</comment>
<comment type="subcellular location">
    <subcellularLocation>
        <location evidence="1">Cytoplasm</location>
    </subcellularLocation>
</comment>
<comment type="similarity">
    <text evidence="1">Belongs to the phosphoglycerate kinase family.</text>
</comment>
<feature type="chain" id="PRO_1000203329" description="Phosphoglycerate kinase">
    <location>
        <begin position="1"/>
        <end position="398"/>
    </location>
</feature>
<feature type="binding site" evidence="1">
    <location>
        <begin position="23"/>
        <end position="25"/>
    </location>
    <ligand>
        <name>substrate</name>
    </ligand>
</feature>
<feature type="binding site" evidence="1">
    <location>
        <position position="38"/>
    </location>
    <ligand>
        <name>substrate</name>
    </ligand>
</feature>
<feature type="binding site" evidence="1">
    <location>
        <begin position="61"/>
        <end position="64"/>
    </location>
    <ligand>
        <name>substrate</name>
    </ligand>
</feature>
<feature type="binding site" evidence="1">
    <location>
        <position position="122"/>
    </location>
    <ligand>
        <name>substrate</name>
    </ligand>
</feature>
<feature type="binding site" evidence="1">
    <location>
        <position position="155"/>
    </location>
    <ligand>
        <name>substrate</name>
    </ligand>
</feature>
<feature type="binding site" evidence="1">
    <location>
        <position position="206"/>
    </location>
    <ligand>
        <name>ATP</name>
        <dbReference type="ChEBI" id="CHEBI:30616"/>
    </ligand>
</feature>
<feature type="binding site" evidence="1">
    <location>
        <position position="297"/>
    </location>
    <ligand>
        <name>ATP</name>
        <dbReference type="ChEBI" id="CHEBI:30616"/>
    </ligand>
</feature>
<feature type="binding site" evidence="1">
    <location>
        <position position="328"/>
    </location>
    <ligand>
        <name>ATP</name>
        <dbReference type="ChEBI" id="CHEBI:30616"/>
    </ligand>
</feature>
<feature type="binding site" evidence="1">
    <location>
        <begin position="354"/>
        <end position="357"/>
    </location>
    <ligand>
        <name>ATP</name>
        <dbReference type="ChEBI" id="CHEBI:30616"/>
    </ligand>
</feature>
<sequence>MNYNKKSIEDIDVKGKKVLVRCDFNVPLNEGKITDENRLVGALPTIKYLMEKGAKIILCSHMGKPKGEPKKELSLLPVAKRLSEMLNKEVIFADDDNVVGENAKKAVEDMKDGDVVLLQNTRYRKEETKNEEVFSKELASLADVFVNDAFGTAHRAHCSTVGVTNYLKEAACGYLIQKELKFLGNAVEKPERPFVAILGGAKVSDKINVINNLLDKVDTLIIGGGMGYTFLKAQGYTIGNSLVEEDKVEYSKEMIDKAKEKGVNLLLPIDNVVADKFDKDASPVVTEDQNIGEGYMGLDIGPKTAKIYSDAIKSAKTVVWNGPMGVFEFKSFANGTIEVAKAMADSDAVTIIGGGDSAAAVNILGFGDNMTHISTGGGASLEFLEGKELPGIAALNDK</sequence>